<sequence length="699" mass="80136">MSDVETFAFQAEINQLLSLIINTFYSNKEIFLRELISNSSDALDKIRFESLTDKSKLDGQPELFIHIIPDKANNTLTIIDSGIGMTKADLVNNLGTIARSGTKEFMEALAAGADVSMIGQFGVGFYSAYLVAEKVVVTTKHNDDEQYVWESQAGGSFTVTRDTSGENLGRGTKMVLYLKEDQLEYLEERRLKDLIKKHSEFISYPISLWVEKTIEKEISDDEEEEEKKDEEGKVEEVDEEKEKEEKKKKKVKEVSNEWSLVNKQKPIWMRKPEEITKEEYAAFYKSLTNDWEEHLAVKHFSVEGQLEFKAVLFVPKRAPFDLFDTKKKPNNIKLYVRRVFIMDNCDELIPEYLSFVKGIVDSEDLPLNISRETLQQNKILKVIRKNLVKKCVELFFEIAENKEDYNKFYEAFSKNLKLGIHEDSQNRAKFAELLRYHSTKSGDEMTSLKDYVTRMKEGQNDIYYITGESKKAVENSPFLEKLKKKGYEVLYMVDAIDEYSIGQLKEFEGKKLVSATKEGLKLDESEDEKKKQEELKEKFEGLCKVMKDVLGDKVEKVIVSDRVVDSPCCLVTGEYGWTANMERIMKAQALRDSSMAGYMSSKKTMEINPENSIMDELRKRADADKNDKSVKDLVLLLFETALLTSGFSLEEPNTFGNRIHRMLKLGLSIDEESGDADADMPALEDPEADAEGSKMEEVD</sequence>
<gene>
    <name type="primary">HSC80</name>
</gene>
<feature type="chain" id="PRO_0000062949" description="Heat shock cognate protein 80">
    <location>
        <begin position="1"/>
        <end position="699"/>
    </location>
</feature>
<feature type="region of interest" description="Disordered" evidence="2">
    <location>
        <begin position="219"/>
        <end position="248"/>
    </location>
</feature>
<feature type="region of interest" description="Disordered" evidence="2">
    <location>
        <begin position="672"/>
        <end position="699"/>
    </location>
</feature>
<feature type="short sequence motif" description="TPR repeat-binding">
    <location>
        <begin position="695"/>
        <end position="699"/>
    </location>
</feature>
<feature type="compositionally biased region" description="Acidic residues" evidence="2">
    <location>
        <begin position="219"/>
        <end position="228"/>
    </location>
</feature>
<feature type="compositionally biased region" description="Acidic residues" evidence="2">
    <location>
        <begin position="672"/>
        <end position="690"/>
    </location>
</feature>
<feature type="binding site" evidence="1">
    <location>
        <position position="38"/>
    </location>
    <ligand>
        <name>ATP</name>
        <dbReference type="ChEBI" id="CHEBI:30616"/>
    </ligand>
</feature>
<feature type="binding site" evidence="1">
    <location>
        <position position="80"/>
    </location>
    <ligand>
        <name>ATP</name>
        <dbReference type="ChEBI" id="CHEBI:30616"/>
    </ligand>
</feature>
<feature type="binding site" evidence="1">
    <location>
        <position position="125"/>
    </location>
    <ligand>
        <name>ATP</name>
        <dbReference type="ChEBI" id="CHEBI:30616"/>
    </ligand>
</feature>
<feature type="binding site" evidence="1">
    <location>
        <position position="371"/>
    </location>
    <ligand>
        <name>ATP</name>
        <dbReference type="ChEBI" id="CHEBI:30616"/>
    </ligand>
</feature>
<name>HSP80_SOLLC</name>
<evidence type="ECO:0000250" key="1"/>
<evidence type="ECO:0000256" key="2">
    <source>
        <dbReference type="SAM" id="MobiDB-lite"/>
    </source>
</evidence>
<evidence type="ECO:0000305" key="3"/>
<proteinExistence type="evidence at transcript level"/>
<accession>P36181</accession>
<dbReference type="EMBL" id="M96549">
    <property type="protein sequence ID" value="AAB01376.1"/>
    <property type="molecule type" value="Genomic_DNA"/>
</dbReference>
<dbReference type="PIR" id="T07037">
    <property type="entry name" value="T07037"/>
</dbReference>
<dbReference type="RefSeq" id="NP_001234439.1">
    <property type="nucleotide sequence ID" value="NM_001247510.1"/>
</dbReference>
<dbReference type="SMR" id="P36181"/>
<dbReference type="FunCoup" id="P36181">
    <property type="interactions" value="2625"/>
</dbReference>
<dbReference type="STRING" id="4081.P36181"/>
<dbReference type="PaxDb" id="4081-Solyc07g065840.2.1"/>
<dbReference type="EnsemblPlants" id="Solyc07g065840.2.1">
    <property type="protein sequence ID" value="Solyc07g065840.2.1"/>
    <property type="gene ID" value="Solyc07g065840.2"/>
</dbReference>
<dbReference type="GeneID" id="543903"/>
<dbReference type="Gramene" id="Solyc07g065840.2.1">
    <property type="protein sequence ID" value="Solyc07g065840.2.1"/>
    <property type="gene ID" value="Solyc07g065840.2"/>
</dbReference>
<dbReference type="KEGG" id="sly:543903"/>
<dbReference type="eggNOG" id="KOG0019">
    <property type="taxonomic scope" value="Eukaryota"/>
</dbReference>
<dbReference type="HOGENOM" id="CLU_006684_1_3_1"/>
<dbReference type="InParanoid" id="P36181"/>
<dbReference type="OMA" id="CHENVIY"/>
<dbReference type="OrthoDB" id="28737at2759"/>
<dbReference type="PhylomeDB" id="P36181"/>
<dbReference type="Proteomes" id="UP000004994">
    <property type="component" value="Chromosome 7"/>
</dbReference>
<dbReference type="ExpressionAtlas" id="P36181">
    <property type="expression patterns" value="baseline and differential"/>
</dbReference>
<dbReference type="GO" id="GO:0005829">
    <property type="term" value="C:cytosol"/>
    <property type="evidence" value="ECO:0000318"/>
    <property type="project" value="GO_Central"/>
</dbReference>
<dbReference type="GO" id="GO:0048471">
    <property type="term" value="C:perinuclear region of cytoplasm"/>
    <property type="evidence" value="ECO:0000318"/>
    <property type="project" value="GO_Central"/>
</dbReference>
<dbReference type="GO" id="GO:0005886">
    <property type="term" value="C:plasma membrane"/>
    <property type="evidence" value="ECO:0000318"/>
    <property type="project" value="GO_Central"/>
</dbReference>
<dbReference type="GO" id="GO:0032991">
    <property type="term" value="C:protein-containing complex"/>
    <property type="evidence" value="ECO:0000318"/>
    <property type="project" value="GO_Central"/>
</dbReference>
<dbReference type="GO" id="GO:0005524">
    <property type="term" value="F:ATP binding"/>
    <property type="evidence" value="ECO:0000318"/>
    <property type="project" value="GO_Central"/>
</dbReference>
<dbReference type="GO" id="GO:0016887">
    <property type="term" value="F:ATP hydrolysis activity"/>
    <property type="evidence" value="ECO:0000318"/>
    <property type="project" value="GO_Central"/>
</dbReference>
<dbReference type="GO" id="GO:0140662">
    <property type="term" value="F:ATP-dependent protein folding chaperone"/>
    <property type="evidence" value="ECO:0007669"/>
    <property type="project" value="InterPro"/>
</dbReference>
<dbReference type="GO" id="GO:0051082">
    <property type="term" value="F:unfolded protein binding"/>
    <property type="evidence" value="ECO:0000318"/>
    <property type="project" value="GO_Central"/>
</dbReference>
<dbReference type="GO" id="GO:0034605">
    <property type="term" value="P:cellular response to heat"/>
    <property type="evidence" value="ECO:0000318"/>
    <property type="project" value="GO_Central"/>
</dbReference>
<dbReference type="GO" id="GO:0006457">
    <property type="term" value="P:protein folding"/>
    <property type="evidence" value="ECO:0000318"/>
    <property type="project" value="GO_Central"/>
</dbReference>
<dbReference type="GO" id="GO:0050821">
    <property type="term" value="P:protein stabilization"/>
    <property type="evidence" value="ECO:0000318"/>
    <property type="project" value="GO_Central"/>
</dbReference>
<dbReference type="CDD" id="cd16927">
    <property type="entry name" value="HATPase_Hsp90-like"/>
    <property type="match status" value="1"/>
</dbReference>
<dbReference type="FunFam" id="3.30.565.10:FF:000012">
    <property type="entry name" value="Heat shock cognate protein"/>
    <property type="match status" value="1"/>
</dbReference>
<dbReference type="FunFam" id="1.20.120.790:FF:000001">
    <property type="entry name" value="Heat shock protein 90 alpha"/>
    <property type="match status" value="1"/>
</dbReference>
<dbReference type="FunFam" id="3.30.230.80:FF:000001">
    <property type="entry name" value="Heat shock protein 90 alpha"/>
    <property type="match status" value="1"/>
</dbReference>
<dbReference type="FunFam" id="3.40.50.11260:FF:000001">
    <property type="entry name" value="Heat shock protein 90 alpha"/>
    <property type="match status" value="1"/>
</dbReference>
<dbReference type="Gene3D" id="3.30.230.80">
    <property type="match status" value="1"/>
</dbReference>
<dbReference type="Gene3D" id="3.40.50.11260">
    <property type="match status" value="1"/>
</dbReference>
<dbReference type="Gene3D" id="1.20.120.790">
    <property type="entry name" value="Heat shock protein 90, C-terminal domain"/>
    <property type="match status" value="1"/>
</dbReference>
<dbReference type="Gene3D" id="3.30.565.10">
    <property type="entry name" value="Histidine kinase-like ATPase, C-terminal domain"/>
    <property type="match status" value="1"/>
</dbReference>
<dbReference type="HAMAP" id="MF_00505">
    <property type="entry name" value="HSP90"/>
    <property type="match status" value="1"/>
</dbReference>
<dbReference type="InterPro" id="IPR036890">
    <property type="entry name" value="HATPase_C_sf"/>
</dbReference>
<dbReference type="InterPro" id="IPR019805">
    <property type="entry name" value="Heat_shock_protein_90_CS"/>
</dbReference>
<dbReference type="InterPro" id="IPR037196">
    <property type="entry name" value="HSP90_C"/>
</dbReference>
<dbReference type="InterPro" id="IPR001404">
    <property type="entry name" value="Hsp90_fam"/>
</dbReference>
<dbReference type="InterPro" id="IPR020575">
    <property type="entry name" value="Hsp90_N"/>
</dbReference>
<dbReference type="InterPro" id="IPR020568">
    <property type="entry name" value="Ribosomal_Su5_D2-typ_SF"/>
</dbReference>
<dbReference type="NCBIfam" id="NF003555">
    <property type="entry name" value="PRK05218.1"/>
    <property type="match status" value="1"/>
</dbReference>
<dbReference type="PANTHER" id="PTHR11528">
    <property type="entry name" value="HEAT SHOCK PROTEIN 90 FAMILY MEMBER"/>
    <property type="match status" value="1"/>
</dbReference>
<dbReference type="Pfam" id="PF13589">
    <property type="entry name" value="HATPase_c_3"/>
    <property type="match status" value="1"/>
</dbReference>
<dbReference type="Pfam" id="PF00183">
    <property type="entry name" value="HSP90"/>
    <property type="match status" value="1"/>
</dbReference>
<dbReference type="PIRSF" id="PIRSF002583">
    <property type="entry name" value="Hsp90"/>
    <property type="match status" value="1"/>
</dbReference>
<dbReference type="PRINTS" id="PR00775">
    <property type="entry name" value="HEATSHOCK90"/>
</dbReference>
<dbReference type="SMART" id="SM00387">
    <property type="entry name" value="HATPase_c"/>
    <property type="match status" value="1"/>
</dbReference>
<dbReference type="SUPFAM" id="SSF55874">
    <property type="entry name" value="ATPase domain of HSP90 chaperone/DNA topoisomerase II/histidine kinase"/>
    <property type="match status" value="1"/>
</dbReference>
<dbReference type="SUPFAM" id="SSF110942">
    <property type="entry name" value="HSP90 C-terminal domain"/>
    <property type="match status" value="1"/>
</dbReference>
<dbReference type="SUPFAM" id="SSF54211">
    <property type="entry name" value="Ribosomal protein S5 domain 2-like"/>
    <property type="match status" value="1"/>
</dbReference>
<dbReference type="PROSITE" id="PS00298">
    <property type="entry name" value="HSP90"/>
    <property type="match status" value="1"/>
</dbReference>
<comment type="function">
    <text evidence="1">Molecular chaperone that promotes the maturation, structural maintenance and proper regulation of specific target proteins involved for instance in cell cycle control and signal transduction. Undergoes a functional cycle that is linked to its ATPase activity. This cycle probably induces conformational changes in the client proteins, thereby causing their activation. Interacts dynamically with various co-chaperones that modulate its substrate recognition, ATPase cycle and chaperone function (By similarity).</text>
</comment>
<comment type="subunit">
    <text evidence="1">Homodimer.</text>
</comment>
<comment type="subcellular location">
    <subcellularLocation>
        <location evidence="3">Cytoplasm</location>
    </subcellularLocation>
</comment>
<comment type="tissue specificity">
    <text>Most abundantly expressed in roots and apical shoots. Low expression in mature leaves.</text>
</comment>
<comment type="developmental stage">
    <text>Increasing levels of expression observed in developing ovaries, floral shoots and roots. Levels decrease with maturation.</text>
</comment>
<comment type="induction">
    <text>Heat treatment increases expression 3-fold in mature leaves. Has little effect on developing shoot apices.</text>
</comment>
<comment type="domain">
    <text evidence="1">The TPR repeat-binding motif mediates interaction with TPR repeat-containing proteins.</text>
</comment>
<comment type="similarity">
    <text evidence="3">Belongs to the heat shock protein 90 family.</text>
</comment>
<keyword id="KW-0067">ATP-binding</keyword>
<keyword id="KW-0143">Chaperone</keyword>
<keyword id="KW-0963">Cytoplasm</keyword>
<keyword id="KW-0547">Nucleotide-binding</keyword>
<keyword id="KW-1185">Reference proteome</keyword>
<keyword id="KW-0346">Stress response</keyword>
<reference key="1">
    <citation type="journal article" date="1992" name="Plant Physiol.">
        <title>Developmental expression of tomato heat-shock cognate protein 80.</title>
        <authorList>
            <person name="Koning A.J."/>
            <person name="Rose R."/>
            <person name="Comai L."/>
        </authorList>
    </citation>
    <scope>NUCLEOTIDE SEQUENCE [GENOMIC DNA]</scope>
    <source>
        <strain>cv. UC82B</strain>
        <tissue>Shoot apex</tissue>
    </source>
</reference>
<protein>
    <recommendedName>
        <fullName>Heat shock cognate protein 80</fullName>
    </recommendedName>
</protein>
<organism>
    <name type="scientific">Solanum lycopersicum</name>
    <name type="common">Tomato</name>
    <name type="synonym">Lycopersicon esculentum</name>
    <dbReference type="NCBI Taxonomy" id="4081"/>
    <lineage>
        <taxon>Eukaryota</taxon>
        <taxon>Viridiplantae</taxon>
        <taxon>Streptophyta</taxon>
        <taxon>Embryophyta</taxon>
        <taxon>Tracheophyta</taxon>
        <taxon>Spermatophyta</taxon>
        <taxon>Magnoliopsida</taxon>
        <taxon>eudicotyledons</taxon>
        <taxon>Gunneridae</taxon>
        <taxon>Pentapetalae</taxon>
        <taxon>asterids</taxon>
        <taxon>lamiids</taxon>
        <taxon>Solanales</taxon>
        <taxon>Solanaceae</taxon>
        <taxon>Solanoideae</taxon>
        <taxon>Solaneae</taxon>
        <taxon>Solanum</taxon>
        <taxon>Solanum subgen. Lycopersicon</taxon>
    </lineage>
</organism>